<accession>Q6XD76</accession>
<accession>Q7RTS2</accession>
<proteinExistence type="evidence at protein level"/>
<evidence type="ECO:0000255" key="1">
    <source>
        <dbReference type="PROSITE-ProRule" id="PRU00981"/>
    </source>
</evidence>
<evidence type="ECO:0000256" key="2">
    <source>
        <dbReference type="SAM" id="MobiDB-lite"/>
    </source>
</evidence>
<evidence type="ECO:0000269" key="3">
    <source>
    </source>
</evidence>
<evidence type="ECO:0000305" key="4"/>
<name>ASCL4_HUMAN</name>
<sequence length="172" mass="19253">METRKPAERLALPYSLRTAPLGVPGTLPGLPRRDPLRVALRLDAACWEWARSGCARGWQYLPVPLDSAFEPAFLRKRNERERQRVRCVNEGYARLRDHLPRELADKRLSKVETLRAAIDYIKHLQELLERQAWGLEGAAGAVPQRRAECNSDGESKASSAPSPSSEPEEGGS</sequence>
<feature type="chain" id="PRO_0000317297" description="Achaete-scute homolog 4">
    <location>
        <begin position="1"/>
        <end position="172"/>
    </location>
</feature>
<feature type="domain" description="bHLH" evidence="1">
    <location>
        <begin position="72"/>
        <end position="124"/>
    </location>
</feature>
<feature type="region of interest" description="Disordered" evidence="2">
    <location>
        <begin position="144"/>
        <end position="172"/>
    </location>
</feature>
<feature type="compositionally biased region" description="Basic and acidic residues" evidence="2">
    <location>
        <begin position="145"/>
        <end position="155"/>
    </location>
</feature>
<feature type="compositionally biased region" description="Low complexity" evidence="2">
    <location>
        <begin position="156"/>
        <end position="165"/>
    </location>
</feature>
<protein>
    <recommendedName>
        <fullName>Achaete-scute homolog 4</fullName>
        <shortName>ASH-4</shortName>
        <shortName>hASH4</shortName>
    </recommendedName>
    <alternativeName>
        <fullName>Achaete-scute-like protein 4</fullName>
    </alternativeName>
    <alternativeName>
        <fullName>Class A basic helix-loop-helix protein 44</fullName>
        <shortName>bHLHa44</shortName>
    </alternativeName>
</protein>
<keyword id="KW-0238">DNA-binding</keyword>
<keyword id="KW-0539">Nucleus</keyword>
<keyword id="KW-1267">Proteomics identification</keyword>
<keyword id="KW-1185">Reference proteome</keyword>
<keyword id="KW-0804">Transcription</keyword>
<keyword id="KW-0805">Transcription regulation</keyword>
<gene>
    <name type="primary">ASCL4</name>
    <name type="synonym">BHLHA44</name>
    <name type="synonym">HASH4</name>
</gene>
<comment type="function">
    <text evidence="3">Could be a transcriptional regulator involved in skin development.</text>
</comment>
<comment type="interaction">
    <interactant intactId="EBI-10254793">
        <id>Q6XD76</id>
    </interactant>
    <interactant intactId="EBI-367510">
        <id>P68133</id>
        <label>ACTA1</label>
    </interactant>
    <organismsDiffer>false</organismsDiffer>
    <experiments>3</experiments>
</comment>
<comment type="interaction">
    <interactant intactId="EBI-10254793">
        <id>Q6XD76</id>
    </interactant>
    <interactant intactId="EBI-21535880">
        <id>Q92870-2</id>
        <label>APBB2</label>
    </interactant>
    <organismsDiffer>false</organismsDiffer>
    <experiments>3</experiments>
</comment>
<comment type="interaction">
    <interactant intactId="EBI-10254793">
        <id>Q6XD76</id>
    </interactant>
    <interactant intactId="EBI-948169">
        <id>P13637</id>
        <label>ATP1A3</label>
    </interactant>
    <organismsDiffer>false</organismsDiffer>
    <experiments>3</experiments>
</comment>
<comment type="interaction">
    <interactant intactId="EBI-10254793">
        <id>Q6XD76</id>
    </interactant>
    <interactant intactId="EBI-718729">
        <id>P55212</id>
        <label>CASP6</label>
    </interactant>
    <organismsDiffer>false</organismsDiffer>
    <experiments>3</experiments>
</comment>
<comment type="interaction">
    <interactant intactId="EBI-10254793">
        <id>Q6XD76</id>
    </interactant>
    <interactant intactId="EBI-6624398">
        <id>P06307</id>
        <label>CCK</label>
    </interactant>
    <organismsDiffer>false</organismsDiffer>
    <experiments>3</experiments>
</comment>
<comment type="interaction">
    <interactant intactId="EBI-10254793">
        <id>Q6XD76</id>
    </interactant>
    <interactant intactId="EBI-25837549">
        <id>P28329-3</id>
        <label>CHAT</label>
    </interactant>
    <organismsDiffer>false</organismsDiffer>
    <experiments>3</experiments>
</comment>
<comment type="interaction">
    <interactant intactId="EBI-10254793">
        <id>Q6XD76</id>
    </interactant>
    <interactant intactId="EBI-446479">
        <id>P99999</id>
        <label>CYCS</label>
    </interactant>
    <organismsDiffer>false</organismsDiffer>
    <experiments>3</experiments>
</comment>
<comment type="interaction">
    <interactant intactId="EBI-10254793">
        <id>Q6XD76</id>
    </interactant>
    <interactant intactId="EBI-10976677">
        <id>G5E9A7</id>
        <label>DMWD</label>
    </interactant>
    <organismsDiffer>false</organismsDiffer>
    <experiments>3</experiments>
</comment>
<comment type="interaction">
    <interactant intactId="EBI-10254793">
        <id>Q6XD76</id>
    </interactant>
    <interactant intactId="EBI-1053164">
        <id>O75190</id>
        <label>DNAJB6</label>
    </interactant>
    <organismsDiffer>false</organismsDiffer>
    <experiments>3</experiments>
</comment>
<comment type="interaction">
    <interactant intactId="EBI-10254793">
        <id>Q6XD76</id>
    </interactant>
    <interactant intactId="EBI-750300">
        <id>Q01658</id>
        <label>DR1</label>
    </interactant>
    <organismsDiffer>false</organismsDiffer>
    <experiments>3</experiments>
</comment>
<comment type="interaction">
    <interactant intactId="EBI-10254793">
        <id>Q6XD76</id>
    </interactant>
    <interactant intactId="EBI-78473">
        <id>P03372</id>
        <label>ESR1</label>
    </interactant>
    <organismsDiffer>false</organismsDiffer>
    <experiments>3</experiments>
</comment>
<comment type="interaction">
    <interactant intactId="EBI-10254793">
        <id>Q6XD76</id>
    </interactant>
    <interactant intactId="EBI-348399">
        <id>P22607</id>
        <label>FGFR3</label>
    </interactant>
    <organismsDiffer>false</organismsDiffer>
    <experiments>3</experiments>
</comment>
<comment type="interaction">
    <interactant intactId="EBI-10254793">
        <id>Q6XD76</id>
    </interactant>
    <interactant intactId="EBI-741101">
        <id>Q13643</id>
        <label>FHL3</label>
    </interactant>
    <organismsDiffer>false</organismsDiffer>
    <experiments>3</experiments>
</comment>
<comment type="interaction">
    <interactant intactId="EBI-10254793">
        <id>Q6XD76</id>
    </interactant>
    <interactant intactId="EBI-852851">
        <id>P01100</id>
        <label>FOS</label>
    </interactant>
    <organismsDiffer>false</organismsDiffer>
    <experiments>3</experiments>
</comment>
<comment type="interaction">
    <interactant intactId="EBI-10254793">
        <id>Q6XD76</id>
    </interactant>
    <interactant intactId="EBI-401755">
        <id>P62993</id>
        <label>GRB2</label>
    </interactant>
    <organismsDiffer>false</organismsDiffer>
    <experiments>3</experiments>
</comment>
<comment type="interaction">
    <interactant intactId="EBI-10254793">
        <id>Q6XD76</id>
    </interactant>
    <interactant intactId="EBI-6980805">
        <id>P42261</id>
        <label>GRIA1</label>
    </interactant>
    <organismsDiffer>false</organismsDiffer>
    <experiments>3</experiments>
</comment>
<comment type="interaction">
    <interactant intactId="EBI-10254793">
        <id>Q6XD76</id>
    </interactant>
    <interactant intactId="EBI-747754">
        <id>P28799</id>
        <label>GRN</label>
    </interactant>
    <organismsDiffer>false</organismsDiffer>
    <experiments>3</experiments>
</comment>
<comment type="interaction">
    <interactant intactId="EBI-10254793">
        <id>Q6XD76</id>
    </interactant>
    <interactant intactId="EBI-389564">
        <id>Q00403</id>
        <label>GTF2B</label>
    </interactant>
    <organismsDiffer>false</organismsDiffer>
    <experiments>3</experiments>
</comment>
<comment type="interaction">
    <interactant intactId="EBI-10254793">
        <id>Q6XD76</id>
    </interactant>
    <interactant intactId="EBI-1054873">
        <id>Q9Y5Q9</id>
        <label>GTF3C3</label>
    </interactant>
    <organismsDiffer>false</organismsDiffer>
    <experiments>3</experiments>
</comment>
<comment type="interaction">
    <interactant intactId="EBI-10254793">
        <id>Q6XD76</id>
    </interactant>
    <interactant intactId="EBI-352682">
        <id>P04792</id>
        <label>HSPB1</label>
    </interactant>
    <organismsDiffer>false</organismsDiffer>
    <experiments>3</experiments>
</comment>
<comment type="interaction">
    <interactant intactId="EBI-10254793">
        <id>Q6XD76</id>
    </interactant>
    <interactant intactId="EBI-466029">
        <id>P42858</id>
        <label>HTT</label>
    </interactant>
    <organismsDiffer>false</organismsDiffer>
    <experiments>6</experiments>
</comment>
<comment type="interaction">
    <interactant intactId="EBI-10254793">
        <id>Q6XD76</id>
    </interactant>
    <interactant intactId="EBI-713450">
        <id>Q02363</id>
        <label>ID2</label>
    </interactant>
    <organismsDiffer>false</organismsDiffer>
    <experiments>4</experiments>
</comment>
<comment type="interaction">
    <interactant intactId="EBI-10254793">
        <id>Q6XD76</id>
    </interactant>
    <interactant intactId="EBI-10975473">
        <id>O60333-2</id>
        <label>KIF1B</label>
    </interactant>
    <organismsDiffer>false</organismsDiffer>
    <experiments>3</experiments>
</comment>
<comment type="interaction">
    <interactant intactId="EBI-10254793">
        <id>Q6XD76</id>
    </interactant>
    <interactant intactId="EBI-21591415">
        <id>P13473-2</id>
        <label>LAMP2</label>
    </interactant>
    <organismsDiffer>false</organismsDiffer>
    <experiments>3</experiments>
</comment>
<comment type="interaction">
    <interactant intactId="EBI-10254793">
        <id>Q6XD76</id>
    </interactant>
    <interactant intactId="EBI-11978579">
        <id>O95983-2</id>
        <label>MBD3</label>
    </interactant>
    <organismsDiffer>false</organismsDiffer>
    <experiments>3</experiments>
</comment>
<comment type="interaction">
    <interactant intactId="EBI-10254793">
        <id>Q6XD76</id>
    </interactant>
    <interactant intactId="EBI-748974">
        <id>Q96CV9</id>
        <label>OPTN</label>
    </interactant>
    <organismsDiffer>false</organismsDiffer>
    <experiments>3</experiments>
</comment>
<comment type="interaction">
    <interactant intactId="EBI-10254793">
        <id>Q6XD76</id>
    </interactant>
    <interactant intactId="EBI-10239064">
        <id>Q17RL8</id>
        <label>PDZD4</label>
    </interactant>
    <organismsDiffer>false</organismsDiffer>
    <experiments>3</experiments>
</comment>
<comment type="interaction">
    <interactant intactId="EBI-10254793">
        <id>Q6XD76</id>
    </interactant>
    <interactant intactId="EBI-716404">
        <id>P16284</id>
        <label>PECAM1</label>
    </interactant>
    <organismsDiffer>false</organismsDiffer>
    <experiments>3</experiments>
</comment>
<comment type="interaction">
    <interactant intactId="EBI-10254793">
        <id>Q6XD76</id>
    </interactant>
    <interactant intactId="EBI-752057">
        <id>Q7Z412</id>
        <label>PEX26</label>
    </interactant>
    <organismsDiffer>false</organismsDiffer>
    <experiments>3</experiments>
</comment>
<comment type="interaction">
    <interactant intactId="EBI-10254793">
        <id>Q6XD76</id>
    </interactant>
    <interactant intactId="EBI-2827556">
        <id>Q13393</id>
        <label>PLD1</label>
    </interactant>
    <organismsDiffer>false</organismsDiffer>
    <experiments>3</experiments>
</comment>
<comment type="interaction">
    <interactant intactId="EBI-10254793">
        <id>Q6XD76</id>
    </interactant>
    <interactant intactId="EBI-749195">
        <id>P60891</id>
        <label>PRPS1</label>
    </interactant>
    <organismsDiffer>false</organismsDiffer>
    <experiments>3</experiments>
</comment>
<comment type="interaction">
    <interactant intactId="EBI-10254793">
        <id>Q6XD76</id>
    </interactant>
    <interactant intactId="EBI-745098">
        <id>P62491</id>
        <label>RAB11A</label>
    </interactant>
    <organismsDiffer>false</organismsDiffer>
    <experiments>3</experiments>
</comment>
<comment type="interaction">
    <interactant intactId="EBI-10254793">
        <id>Q6XD76</id>
    </interactant>
    <interactant intactId="EBI-286642">
        <id>P62826</id>
        <label>RAN</label>
    </interactant>
    <organismsDiffer>false</organismsDiffer>
    <experiments>3</experiments>
</comment>
<comment type="interaction">
    <interactant intactId="EBI-10254793">
        <id>Q6XD76</id>
    </interactant>
    <interactant intactId="EBI-396669">
        <id>Q9Y3C5</id>
        <label>RNF11</label>
    </interactant>
    <organismsDiffer>false</organismsDiffer>
    <experiments>3</experiments>
</comment>
<comment type="interaction">
    <interactant intactId="EBI-10254793">
        <id>Q6XD76</id>
    </interactant>
    <interactant intactId="EBI-5235340">
        <id>Q7Z699</id>
        <label>SPRED1</label>
    </interactant>
    <organismsDiffer>false</organismsDiffer>
    <experiments>3</experiments>
</comment>
<comment type="interaction">
    <interactant intactId="EBI-10254793">
        <id>Q6XD76</id>
    </interactant>
    <interactant intactId="EBI-621482">
        <id>P12931</id>
        <label>SRC</label>
    </interactant>
    <organismsDiffer>false</organismsDiffer>
    <experiments>3</experiments>
</comment>
<comment type="interaction">
    <interactant intactId="EBI-10254793">
        <id>Q6XD76</id>
    </interactant>
    <interactant intactId="EBI-722877">
        <id>Q99081</id>
        <label>TCF12</label>
    </interactant>
    <organismsDiffer>false</organismsDiffer>
    <experiments>4</experiments>
</comment>
<comment type="interaction">
    <interactant intactId="EBI-10254793">
        <id>Q6XD76</id>
    </interactant>
    <interactant intactId="EBI-11952764">
        <id>Q99081-3</id>
        <label>TCF12</label>
    </interactant>
    <organismsDiffer>false</organismsDiffer>
    <experiments>3</experiments>
</comment>
<comment type="interaction">
    <interactant intactId="EBI-10254793">
        <id>Q6XD76</id>
    </interactant>
    <interactant intactId="EBI-533224">
        <id>P15884</id>
        <label>TCF4</label>
    </interactant>
    <organismsDiffer>false</organismsDiffer>
    <experiments>3</experiments>
</comment>
<comment type="interaction">
    <interactant intactId="EBI-10254793">
        <id>Q6XD76</id>
    </interactant>
    <interactant intactId="EBI-13636688">
        <id>P15884-3</id>
        <label>TCF4</label>
    </interactant>
    <organismsDiffer>false</organismsDiffer>
    <experiments>3</experiments>
</comment>
<comment type="interaction">
    <interactant intactId="EBI-10254793">
        <id>Q6XD76</id>
    </interactant>
    <interactant intactId="EBI-12806590">
        <id>Q86WV8</id>
        <label>TSC1</label>
    </interactant>
    <organismsDiffer>false</organismsDiffer>
    <experiments>3</experiments>
</comment>
<comment type="interaction">
    <interactant intactId="EBI-10254793">
        <id>Q6XD76</id>
    </interactant>
    <interactant intactId="EBI-741480">
        <id>Q9UMX0</id>
        <label>UBQLN1</label>
    </interactant>
    <organismsDiffer>false</organismsDiffer>
    <experiments>3</experiments>
</comment>
<comment type="interaction">
    <interactant intactId="EBI-10254793">
        <id>Q6XD76</id>
    </interactant>
    <interactant intactId="EBI-353844">
        <id>P08670</id>
        <label>VIM</label>
    </interactant>
    <organismsDiffer>false</organismsDiffer>
    <experiments>3</experiments>
</comment>
<comment type="interaction">
    <interactant intactId="EBI-10254793">
        <id>Q6XD76</id>
    </interactant>
    <interactant intactId="EBI-25896548">
        <id>P04275-2</id>
        <label>VWF</label>
    </interactant>
    <organismsDiffer>false</organismsDiffer>
    <experiments>3</experiments>
</comment>
<comment type="interaction">
    <interactant intactId="EBI-10254793">
        <id>Q6XD76</id>
    </interactant>
    <interactant intactId="EBI-720609">
        <id>O76024</id>
        <label>WFS1</label>
    </interactant>
    <organismsDiffer>false</organismsDiffer>
    <experiments>3</experiments>
</comment>
<comment type="interaction">
    <interactant intactId="EBI-10254793">
        <id>Q6XD76</id>
    </interactant>
    <interactant intactId="EBI-25900580">
        <id>Q9Y649</id>
    </interactant>
    <organismsDiffer>false</organismsDiffer>
    <experiments>3</experiments>
</comment>
<comment type="subcellular location">
    <subcellularLocation>
        <location evidence="1">Nucleus</location>
    </subcellularLocation>
</comment>
<comment type="tissue specificity">
    <text evidence="3">Expressed in skin. 7-fold higher expression in fetal skin than in adult skin. Weak expression also detected in fetal lung, aorta and brain, and in adult stomach, kidney, ovary and breast.</text>
</comment>
<comment type="sequence caution" evidence="4">
    <conflict type="erroneous initiation">
        <sequence resource="EMBL-CDS" id="DAA01055"/>
    </conflict>
    <text>Extended N-terminus.</text>
</comment>
<dbReference type="EMBL" id="AY238895">
    <property type="protein sequence ID" value="AAP69222.1"/>
    <property type="molecule type" value="mRNA"/>
</dbReference>
<dbReference type="EMBL" id="AC007622">
    <property type="status" value="NOT_ANNOTATED_CDS"/>
    <property type="molecule type" value="Genomic_DNA"/>
</dbReference>
<dbReference type="EMBL" id="BC128211">
    <property type="protein sequence ID" value="AAI28212.1"/>
    <property type="molecule type" value="mRNA"/>
</dbReference>
<dbReference type="EMBL" id="BC128212">
    <property type="protein sequence ID" value="AAI28213.1"/>
    <property type="molecule type" value="mRNA"/>
</dbReference>
<dbReference type="EMBL" id="BK000275">
    <property type="protein sequence ID" value="DAA01055.1"/>
    <property type="status" value="ALT_INIT"/>
    <property type="molecule type" value="mRNA"/>
</dbReference>
<dbReference type="CCDS" id="CCDS31894.3"/>
<dbReference type="RefSeq" id="NP_982260.3">
    <property type="nucleotide sequence ID" value="NM_203436.3"/>
</dbReference>
<dbReference type="SMR" id="Q6XD76"/>
<dbReference type="BioGRID" id="125737">
    <property type="interactions" value="17"/>
</dbReference>
<dbReference type="FunCoup" id="Q6XD76">
    <property type="interactions" value="173"/>
</dbReference>
<dbReference type="IntAct" id="Q6XD76">
    <property type="interactions" value="55"/>
</dbReference>
<dbReference type="MINT" id="Q6XD76"/>
<dbReference type="STRING" id="9606.ENSP00000345420"/>
<dbReference type="BioMuta" id="ASCL4"/>
<dbReference type="DMDM" id="74749505"/>
<dbReference type="jPOST" id="Q6XD76"/>
<dbReference type="MassIVE" id="Q6XD76"/>
<dbReference type="PaxDb" id="9606-ENSP00000345420"/>
<dbReference type="PeptideAtlas" id="Q6XD76"/>
<dbReference type="ProteomicsDB" id="67795"/>
<dbReference type="Antibodypedia" id="30729">
    <property type="antibodies" value="33 antibodies from 17 providers"/>
</dbReference>
<dbReference type="DNASU" id="121549"/>
<dbReference type="Ensembl" id="ENST00000342331.5">
    <property type="protein sequence ID" value="ENSP00000345420.5"/>
    <property type="gene ID" value="ENSG00000187855.6"/>
</dbReference>
<dbReference type="GeneID" id="121549"/>
<dbReference type="KEGG" id="hsa:121549"/>
<dbReference type="MANE-Select" id="ENST00000342331.5">
    <property type="protein sequence ID" value="ENSP00000345420.5"/>
    <property type="RefSeq nucleotide sequence ID" value="NM_203436.3"/>
    <property type="RefSeq protein sequence ID" value="NP_982260.3"/>
</dbReference>
<dbReference type="UCSC" id="uc001tmr.3">
    <property type="organism name" value="human"/>
</dbReference>
<dbReference type="AGR" id="HGNC:24311"/>
<dbReference type="CTD" id="121549"/>
<dbReference type="DisGeNET" id="121549"/>
<dbReference type="GeneCards" id="ASCL4"/>
<dbReference type="HGNC" id="HGNC:24311">
    <property type="gene designation" value="ASCL4"/>
</dbReference>
<dbReference type="HPA" id="ENSG00000187855">
    <property type="expression patterns" value="Not detected"/>
</dbReference>
<dbReference type="MIM" id="609155">
    <property type="type" value="gene"/>
</dbReference>
<dbReference type="neXtProt" id="NX_Q6XD76"/>
<dbReference type="OpenTargets" id="ENSG00000187855"/>
<dbReference type="PharmGKB" id="PA134869300"/>
<dbReference type="VEuPathDB" id="HostDB:ENSG00000187855"/>
<dbReference type="eggNOG" id="KOG4029">
    <property type="taxonomic scope" value="Eukaryota"/>
</dbReference>
<dbReference type="GeneTree" id="ENSGT00940000162902"/>
<dbReference type="HOGENOM" id="CLU_095919_1_0_1"/>
<dbReference type="InParanoid" id="Q6XD76"/>
<dbReference type="OMA" id="YIPFPGY"/>
<dbReference type="OrthoDB" id="5976910at2759"/>
<dbReference type="PAN-GO" id="Q6XD76">
    <property type="GO annotations" value="4 GO annotations based on evolutionary models"/>
</dbReference>
<dbReference type="PhylomeDB" id="Q6XD76"/>
<dbReference type="TreeFam" id="TF322889"/>
<dbReference type="PathwayCommons" id="Q6XD76"/>
<dbReference type="SignaLink" id="Q6XD76"/>
<dbReference type="BioGRID-ORCS" id="121549">
    <property type="hits" value="16 hits in 1157 CRISPR screens"/>
</dbReference>
<dbReference type="GenomeRNAi" id="121549"/>
<dbReference type="Pharos" id="Q6XD76">
    <property type="development level" value="Tdark"/>
</dbReference>
<dbReference type="PRO" id="PR:Q6XD76"/>
<dbReference type="Proteomes" id="UP000005640">
    <property type="component" value="Chromosome 12"/>
</dbReference>
<dbReference type="RNAct" id="Q6XD76">
    <property type="molecule type" value="protein"/>
</dbReference>
<dbReference type="Bgee" id="ENSG00000187855">
    <property type="expression patterns" value="Expressed in tonsil and 8 other cell types or tissues"/>
</dbReference>
<dbReference type="GO" id="GO:0000785">
    <property type="term" value="C:chromatin"/>
    <property type="evidence" value="ECO:0000247"/>
    <property type="project" value="NTNU_SB"/>
</dbReference>
<dbReference type="GO" id="GO:0090575">
    <property type="term" value="C:RNA polymerase II transcription regulator complex"/>
    <property type="evidence" value="ECO:0000318"/>
    <property type="project" value="GO_Central"/>
</dbReference>
<dbReference type="GO" id="GO:0000981">
    <property type="term" value="F:DNA-binding transcription factor activity, RNA polymerase II-specific"/>
    <property type="evidence" value="ECO:0000247"/>
    <property type="project" value="NTNU_SB"/>
</dbReference>
<dbReference type="GO" id="GO:0046983">
    <property type="term" value="F:protein dimerization activity"/>
    <property type="evidence" value="ECO:0007669"/>
    <property type="project" value="InterPro"/>
</dbReference>
<dbReference type="GO" id="GO:0000977">
    <property type="term" value="F:RNA polymerase II transcription regulatory region sequence-specific DNA binding"/>
    <property type="evidence" value="ECO:0000318"/>
    <property type="project" value="GO_Central"/>
</dbReference>
<dbReference type="GO" id="GO:0006357">
    <property type="term" value="P:regulation of transcription by RNA polymerase II"/>
    <property type="evidence" value="ECO:0000318"/>
    <property type="project" value="GO_Central"/>
</dbReference>
<dbReference type="GO" id="GO:0043588">
    <property type="term" value="P:skin development"/>
    <property type="evidence" value="ECO:0000303"/>
    <property type="project" value="UniProtKB"/>
</dbReference>
<dbReference type="FunFam" id="4.10.280.10:FF:000038">
    <property type="entry name" value="achaete-scute homolog 3"/>
    <property type="match status" value="1"/>
</dbReference>
<dbReference type="Gene3D" id="4.10.280.10">
    <property type="entry name" value="Helix-loop-helix DNA-binding domain"/>
    <property type="match status" value="1"/>
</dbReference>
<dbReference type="InterPro" id="IPR011598">
    <property type="entry name" value="bHLH_dom"/>
</dbReference>
<dbReference type="InterPro" id="IPR050283">
    <property type="entry name" value="E-box_TF_Regulators"/>
</dbReference>
<dbReference type="InterPro" id="IPR036638">
    <property type="entry name" value="HLH_DNA-bd_sf"/>
</dbReference>
<dbReference type="PANTHER" id="PTHR23349">
    <property type="entry name" value="BASIC HELIX-LOOP-HELIX TRANSCRIPTION FACTOR, TWIST"/>
    <property type="match status" value="1"/>
</dbReference>
<dbReference type="PANTHER" id="PTHR23349:SF108">
    <property type="entry name" value="BHLH DOMAIN-CONTAINING PROTEIN"/>
    <property type="match status" value="1"/>
</dbReference>
<dbReference type="Pfam" id="PF00010">
    <property type="entry name" value="HLH"/>
    <property type="match status" value="1"/>
</dbReference>
<dbReference type="SMART" id="SM00353">
    <property type="entry name" value="HLH"/>
    <property type="match status" value="1"/>
</dbReference>
<dbReference type="SUPFAM" id="SSF47459">
    <property type="entry name" value="HLH, helix-loop-helix DNA-binding domain"/>
    <property type="match status" value="1"/>
</dbReference>
<dbReference type="PROSITE" id="PS50888">
    <property type="entry name" value="BHLH"/>
    <property type="match status" value="1"/>
</dbReference>
<organism>
    <name type="scientific">Homo sapiens</name>
    <name type="common">Human</name>
    <dbReference type="NCBI Taxonomy" id="9606"/>
    <lineage>
        <taxon>Eukaryota</taxon>
        <taxon>Metazoa</taxon>
        <taxon>Chordata</taxon>
        <taxon>Craniata</taxon>
        <taxon>Vertebrata</taxon>
        <taxon>Euteleostomi</taxon>
        <taxon>Mammalia</taxon>
        <taxon>Eutheria</taxon>
        <taxon>Euarchontoglires</taxon>
        <taxon>Primates</taxon>
        <taxon>Haplorrhini</taxon>
        <taxon>Catarrhini</taxon>
        <taxon>Hominidae</taxon>
        <taxon>Homo</taxon>
    </lineage>
</organism>
<reference key="1">
    <citation type="journal article" date="2004" name="Genomics">
        <title>Hash4, a novel human achaete-scute homologue found in fetal skin.</title>
        <authorList>
            <person name="Jonsson M."/>
            <person name="Bjoerntorp Mark E."/>
            <person name="Brantsing C."/>
            <person name="Brandner J.M."/>
            <person name="Lindahl A."/>
            <person name="Asp J."/>
        </authorList>
    </citation>
    <scope>NUCLEOTIDE SEQUENCE [MRNA]</scope>
    <scope>FUNCTION</scope>
    <scope>TISSUE SPECIFICITY</scope>
    <source>
        <tissue>Skin</tissue>
    </source>
</reference>
<reference key="2">
    <citation type="journal article" date="2006" name="Nature">
        <title>The finished DNA sequence of human chromosome 12.</title>
        <authorList>
            <person name="Scherer S.E."/>
            <person name="Muzny D.M."/>
            <person name="Buhay C.J."/>
            <person name="Chen R."/>
            <person name="Cree A."/>
            <person name="Ding Y."/>
            <person name="Dugan-Rocha S."/>
            <person name="Gill R."/>
            <person name="Gunaratne P."/>
            <person name="Harris R.A."/>
            <person name="Hawes A.C."/>
            <person name="Hernandez J."/>
            <person name="Hodgson A.V."/>
            <person name="Hume J."/>
            <person name="Jackson A."/>
            <person name="Khan Z.M."/>
            <person name="Kovar-Smith C."/>
            <person name="Lewis L.R."/>
            <person name="Lozado R.J."/>
            <person name="Metzker M.L."/>
            <person name="Milosavljevic A."/>
            <person name="Miner G.R."/>
            <person name="Montgomery K.T."/>
            <person name="Morgan M.B."/>
            <person name="Nazareth L.V."/>
            <person name="Scott G."/>
            <person name="Sodergren E."/>
            <person name="Song X.-Z."/>
            <person name="Steffen D."/>
            <person name="Lovering R.C."/>
            <person name="Wheeler D.A."/>
            <person name="Worley K.C."/>
            <person name="Yuan Y."/>
            <person name="Zhang Z."/>
            <person name="Adams C.Q."/>
            <person name="Ansari-Lari M.A."/>
            <person name="Ayele M."/>
            <person name="Brown M.J."/>
            <person name="Chen G."/>
            <person name="Chen Z."/>
            <person name="Clerc-Blankenburg K.P."/>
            <person name="Davis C."/>
            <person name="Delgado O."/>
            <person name="Dinh H.H."/>
            <person name="Draper H."/>
            <person name="Gonzalez-Garay M.L."/>
            <person name="Havlak P."/>
            <person name="Jackson L.R."/>
            <person name="Jacob L.S."/>
            <person name="Kelly S.H."/>
            <person name="Li L."/>
            <person name="Li Z."/>
            <person name="Liu J."/>
            <person name="Liu W."/>
            <person name="Lu J."/>
            <person name="Maheshwari M."/>
            <person name="Nguyen B.-V."/>
            <person name="Okwuonu G.O."/>
            <person name="Pasternak S."/>
            <person name="Perez L.M."/>
            <person name="Plopper F.J.H."/>
            <person name="Santibanez J."/>
            <person name="Shen H."/>
            <person name="Tabor P.E."/>
            <person name="Verduzco D."/>
            <person name="Waldron L."/>
            <person name="Wang Q."/>
            <person name="Williams G.A."/>
            <person name="Zhang J."/>
            <person name="Zhou J."/>
            <person name="Allen C.C."/>
            <person name="Amin A.G."/>
            <person name="Anyalebechi V."/>
            <person name="Bailey M."/>
            <person name="Barbaria J.A."/>
            <person name="Bimage K.E."/>
            <person name="Bryant N.P."/>
            <person name="Burch P.E."/>
            <person name="Burkett C.E."/>
            <person name="Burrell K.L."/>
            <person name="Calderon E."/>
            <person name="Cardenas V."/>
            <person name="Carter K."/>
            <person name="Casias K."/>
            <person name="Cavazos I."/>
            <person name="Cavazos S.R."/>
            <person name="Ceasar H."/>
            <person name="Chacko J."/>
            <person name="Chan S.N."/>
            <person name="Chavez D."/>
            <person name="Christopoulos C."/>
            <person name="Chu J."/>
            <person name="Cockrell R."/>
            <person name="Cox C.D."/>
            <person name="Dang M."/>
            <person name="Dathorne S.R."/>
            <person name="David R."/>
            <person name="Davis C.M."/>
            <person name="Davy-Carroll L."/>
            <person name="Deshazo D.R."/>
            <person name="Donlin J.E."/>
            <person name="D'Souza L."/>
            <person name="Eaves K.A."/>
            <person name="Egan A."/>
            <person name="Emery-Cohen A.J."/>
            <person name="Escotto M."/>
            <person name="Flagg N."/>
            <person name="Forbes L.D."/>
            <person name="Gabisi A.M."/>
            <person name="Garza M."/>
            <person name="Hamilton C."/>
            <person name="Henderson N."/>
            <person name="Hernandez O."/>
            <person name="Hines S."/>
            <person name="Hogues M.E."/>
            <person name="Huang M."/>
            <person name="Idlebird D.G."/>
            <person name="Johnson R."/>
            <person name="Jolivet A."/>
            <person name="Jones S."/>
            <person name="Kagan R."/>
            <person name="King L.M."/>
            <person name="Leal B."/>
            <person name="Lebow H."/>
            <person name="Lee S."/>
            <person name="LeVan J.M."/>
            <person name="Lewis L.C."/>
            <person name="London P."/>
            <person name="Lorensuhewa L.M."/>
            <person name="Loulseged H."/>
            <person name="Lovett D.A."/>
            <person name="Lucier A."/>
            <person name="Lucier R.L."/>
            <person name="Ma J."/>
            <person name="Madu R.C."/>
            <person name="Mapua P."/>
            <person name="Martindale A.D."/>
            <person name="Martinez E."/>
            <person name="Massey E."/>
            <person name="Mawhiney S."/>
            <person name="Meador M.G."/>
            <person name="Mendez S."/>
            <person name="Mercado C."/>
            <person name="Mercado I.C."/>
            <person name="Merritt C.E."/>
            <person name="Miner Z.L."/>
            <person name="Minja E."/>
            <person name="Mitchell T."/>
            <person name="Mohabbat F."/>
            <person name="Mohabbat K."/>
            <person name="Montgomery B."/>
            <person name="Moore N."/>
            <person name="Morris S."/>
            <person name="Munidasa M."/>
            <person name="Ngo R.N."/>
            <person name="Nguyen N.B."/>
            <person name="Nickerson E."/>
            <person name="Nwaokelemeh O.O."/>
            <person name="Nwokenkwo S."/>
            <person name="Obregon M."/>
            <person name="Oguh M."/>
            <person name="Oragunye N."/>
            <person name="Oviedo R.J."/>
            <person name="Parish B.J."/>
            <person name="Parker D.N."/>
            <person name="Parrish J."/>
            <person name="Parks K.L."/>
            <person name="Paul H.A."/>
            <person name="Payton B.A."/>
            <person name="Perez A."/>
            <person name="Perrin W."/>
            <person name="Pickens A."/>
            <person name="Primus E.L."/>
            <person name="Pu L.-L."/>
            <person name="Puazo M."/>
            <person name="Quiles M.M."/>
            <person name="Quiroz J.B."/>
            <person name="Rabata D."/>
            <person name="Reeves K."/>
            <person name="Ruiz S.J."/>
            <person name="Shao H."/>
            <person name="Sisson I."/>
            <person name="Sonaike T."/>
            <person name="Sorelle R.P."/>
            <person name="Sutton A.E."/>
            <person name="Svatek A.F."/>
            <person name="Svetz L.A."/>
            <person name="Tamerisa K.S."/>
            <person name="Taylor T.R."/>
            <person name="Teague B."/>
            <person name="Thomas N."/>
            <person name="Thorn R.D."/>
            <person name="Trejos Z.Y."/>
            <person name="Trevino B.K."/>
            <person name="Ukegbu O.N."/>
            <person name="Urban J.B."/>
            <person name="Vasquez L.I."/>
            <person name="Vera V.A."/>
            <person name="Villasana D.M."/>
            <person name="Wang L."/>
            <person name="Ward-Moore S."/>
            <person name="Warren J.T."/>
            <person name="Wei X."/>
            <person name="White F."/>
            <person name="Williamson A.L."/>
            <person name="Wleczyk R."/>
            <person name="Wooden H.S."/>
            <person name="Wooden S.H."/>
            <person name="Yen J."/>
            <person name="Yoon L."/>
            <person name="Yoon V."/>
            <person name="Zorrilla S.E."/>
            <person name="Nelson D."/>
            <person name="Kucherlapati R."/>
            <person name="Weinstock G."/>
            <person name="Gibbs R.A."/>
        </authorList>
    </citation>
    <scope>NUCLEOTIDE SEQUENCE [LARGE SCALE GENOMIC DNA]</scope>
</reference>
<reference key="3">
    <citation type="journal article" date="2004" name="Genome Res.">
        <title>The status, quality, and expansion of the NIH full-length cDNA project: the Mammalian Gene Collection (MGC).</title>
        <authorList>
            <consortium name="The MGC Project Team"/>
        </authorList>
    </citation>
    <scope>NUCLEOTIDE SEQUENCE [LARGE SCALE MRNA]</scope>
</reference>
<reference key="4">
    <citation type="journal article" date="2002" name="Mech. Dev.">
        <title>Exhaustive identification of human class II basic helix-loop-helix proteins by virtual library screening.</title>
        <authorList>
            <person name="McLellan A.S."/>
            <person name="Langlands K."/>
            <person name="Kealey T."/>
        </authorList>
    </citation>
    <scope>IDENTIFICATION</scope>
</reference>